<feature type="chain" id="PRO_0000168676" description="Ribosomal silencing factor RsfS">
    <location>
        <begin position="1"/>
        <end position="105"/>
    </location>
</feature>
<proteinExistence type="inferred from homology"/>
<dbReference type="EMBL" id="AE005674">
    <property type="protein sequence ID" value="AAN42280.1"/>
    <property type="status" value="ALT_INIT"/>
    <property type="molecule type" value="Genomic_DNA"/>
</dbReference>
<dbReference type="EMBL" id="AE014073">
    <property type="protein sequence ID" value="AAP16151.1"/>
    <property type="status" value="ALT_INIT"/>
    <property type="molecule type" value="Genomic_DNA"/>
</dbReference>
<dbReference type="RefSeq" id="WP_001161664.1">
    <property type="nucleotide sequence ID" value="NZ_WPGW01000002.1"/>
</dbReference>
<dbReference type="SMR" id="P0AAT8"/>
<dbReference type="STRING" id="198214.SF0644"/>
<dbReference type="PaxDb" id="198214-SF0644"/>
<dbReference type="GeneID" id="93776845"/>
<dbReference type="KEGG" id="sfx:S0666"/>
<dbReference type="PATRIC" id="fig|623.156.peg.4709"/>
<dbReference type="HOGENOM" id="CLU_092688_5_2_6"/>
<dbReference type="Proteomes" id="UP000001006">
    <property type="component" value="Chromosome"/>
</dbReference>
<dbReference type="Proteomes" id="UP000002673">
    <property type="component" value="Chromosome"/>
</dbReference>
<dbReference type="GO" id="GO:0005737">
    <property type="term" value="C:cytoplasm"/>
    <property type="evidence" value="ECO:0007669"/>
    <property type="project" value="UniProtKB-SubCell"/>
</dbReference>
<dbReference type="GO" id="GO:0043023">
    <property type="term" value="F:ribosomal large subunit binding"/>
    <property type="evidence" value="ECO:0007669"/>
    <property type="project" value="TreeGrafter"/>
</dbReference>
<dbReference type="GO" id="GO:0042256">
    <property type="term" value="P:cytosolic ribosome assembly"/>
    <property type="evidence" value="ECO:0007669"/>
    <property type="project" value="UniProtKB-UniRule"/>
</dbReference>
<dbReference type="GO" id="GO:0090071">
    <property type="term" value="P:negative regulation of ribosome biogenesis"/>
    <property type="evidence" value="ECO:0007669"/>
    <property type="project" value="UniProtKB-UniRule"/>
</dbReference>
<dbReference type="GO" id="GO:0017148">
    <property type="term" value="P:negative regulation of translation"/>
    <property type="evidence" value="ECO:0007669"/>
    <property type="project" value="UniProtKB-UniRule"/>
</dbReference>
<dbReference type="FunFam" id="3.30.460.10:FF:000004">
    <property type="entry name" value="Ribosomal silencing factor RsfS"/>
    <property type="match status" value="1"/>
</dbReference>
<dbReference type="Gene3D" id="3.30.460.10">
    <property type="entry name" value="Beta Polymerase, domain 2"/>
    <property type="match status" value="1"/>
</dbReference>
<dbReference type="HAMAP" id="MF_01477">
    <property type="entry name" value="Iojap_RsfS"/>
    <property type="match status" value="1"/>
</dbReference>
<dbReference type="InterPro" id="IPR004394">
    <property type="entry name" value="Iojap/RsfS/C7orf30"/>
</dbReference>
<dbReference type="InterPro" id="IPR043519">
    <property type="entry name" value="NT_sf"/>
</dbReference>
<dbReference type="NCBIfam" id="TIGR00090">
    <property type="entry name" value="rsfS_iojap_ybeB"/>
    <property type="match status" value="1"/>
</dbReference>
<dbReference type="PANTHER" id="PTHR21043">
    <property type="entry name" value="IOJAP SUPERFAMILY ORTHOLOG"/>
    <property type="match status" value="1"/>
</dbReference>
<dbReference type="PANTHER" id="PTHR21043:SF0">
    <property type="entry name" value="MITOCHONDRIAL ASSEMBLY OF RIBOSOMAL LARGE SUBUNIT PROTEIN 1"/>
    <property type="match status" value="1"/>
</dbReference>
<dbReference type="Pfam" id="PF02410">
    <property type="entry name" value="RsfS"/>
    <property type="match status" value="1"/>
</dbReference>
<dbReference type="SUPFAM" id="SSF81301">
    <property type="entry name" value="Nucleotidyltransferase"/>
    <property type="match status" value="1"/>
</dbReference>
<reference key="1">
    <citation type="journal article" date="2002" name="Nucleic Acids Res.">
        <title>Genome sequence of Shigella flexneri 2a: insights into pathogenicity through comparison with genomes of Escherichia coli K12 and O157.</title>
        <authorList>
            <person name="Jin Q."/>
            <person name="Yuan Z."/>
            <person name="Xu J."/>
            <person name="Wang Y."/>
            <person name="Shen Y."/>
            <person name="Lu W."/>
            <person name="Wang J."/>
            <person name="Liu H."/>
            <person name="Yang J."/>
            <person name="Yang F."/>
            <person name="Zhang X."/>
            <person name="Zhang J."/>
            <person name="Yang G."/>
            <person name="Wu H."/>
            <person name="Qu D."/>
            <person name="Dong J."/>
            <person name="Sun L."/>
            <person name="Xue Y."/>
            <person name="Zhao A."/>
            <person name="Gao Y."/>
            <person name="Zhu J."/>
            <person name="Kan B."/>
            <person name="Ding K."/>
            <person name="Chen S."/>
            <person name="Cheng H."/>
            <person name="Yao Z."/>
            <person name="He B."/>
            <person name="Chen R."/>
            <person name="Ma D."/>
            <person name="Qiang B."/>
            <person name="Wen Y."/>
            <person name="Hou Y."/>
            <person name="Yu J."/>
        </authorList>
    </citation>
    <scope>NUCLEOTIDE SEQUENCE [LARGE SCALE GENOMIC DNA]</scope>
    <source>
        <strain>301 / Serotype 2a</strain>
    </source>
</reference>
<reference key="2">
    <citation type="journal article" date="2003" name="Infect. Immun.">
        <title>Complete genome sequence and comparative genomics of Shigella flexneri serotype 2a strain 2457T.</title>
        <authorList>
            <person name="Wei J."/>
            <person name="Goldberg M.B."/>
            <person name="Burland V."/>
            <person name="Venkatesan M.M."/>
            <person name="Deng W."/>
            <person name="Fournier G."/>
            <person name="Mayhew G.F."/>
            <person name="Plunkett G. III"/>
            <person name="Rose D.J."/>
            <person name="Darling A."/>
            <person name="Mau B."/>
            <person name="Perna N.T."/>
            <person name="Payne S.M."/>
            <person name="Runyen-Janecky L.J."/>
            <person name="Zhou S."/>
            <person name="Schwartz D.C."/>
            <person name="Blattner F.R."/>
        </authorList>
    </citation>
    <scope>NUCLEOTIDE SEQUENCE [LARGE SCALE GENOMIC DNA]</scope>
    <source>
        <strain>ATCC 700930 / 2457T / Serotype 2a</strain>
    </source>
</reference>
<accession>P0AAT8</accession>
<accession>P05848</accession>
<accession>P77107</accession>
<comment type="function">
    <text evidence="1">Functions as a ribosomal silencing factor. Interacts with ribosomal protein uL14 (rplN), blocking formation of intersubunit bridge B8. Prevents association of the 30S and 50S ribosomal subunits and the formation of functional ribosomes, thus repressing translation.</text>
</comment>
<comment type="subunit">
    <text evidence="1">Interacts with ribosomal protein uL14 (rplN).</text>
</comment>
<comment type="subcellular location">
    <subcellularLocation>
        <location evidence="1">Cytoplasm</location>
    </subcellularLocation>
</comment>
<comment type="similarity">
    <text evidence="1">Belongs to the Iojap/RsfS family.</text>
</comment>
<comment type="sequence caution" evidence="2">
    <conflict type="erroneous initiation">
        <sequence resource="EMBL-CDS" id="AAN42280"/>
    </conflict>
    <text>Truncated N-terminus.</text>
</comment>
<comment type="sequence caution" evidence="2">
    <conflict type="erroneous initiation">
        <sequence resource="EMBL-CDS" id="AAP16151"/>
    </conflict>
    <text>Truncated N-terminus.</text>
</comment>
<evidence type="ECO:0000255" key="1">
    <source>
        <dbReference type="HAMAP-Rule" id="MF_01477"/>
    </source>
</evidence>
<evidence type="ECO:0000305" key="2"/>
<name>IOJAP_SHIFL</name>
<organism>
    <name type="scientific">Shigella flexneri</name>
    <dbReference type="NCBI Taxonomy" id="623"/>
    <lineage>
        <taxon>Bacteria</taxon>
        <taxon>Pseudomonadati</taxon>
        <taxon>Pseudomonadota</taxon>
        <taxon>Gammaproteobacteria</taxon>
        <taxon>Enterobacterales</taxon>
        <taxon>Enterobacteriaceae</taxon>
        <taxon>Shigella</taxon>
    </lineage>
</organism>
<keyword id="KW-0963">Cytoplasm</keyword>
<keyword id="KW-1185">Reference proteome</keyword>
<keyword id="KW-0678">Repressor</keyword>
<keyword id="KW-0810">Translation regulation</keyword>
<protein>
    <recommendedName>
        <fullName evidence="1">Ribosomal silencing factor RsfS</fullName>
    </recommendedName>
</protein>
<gene>
    <name evidence="1" type="primary">rsfS</name>
    <name type="synonym">ybeB</name>
    <name type="ordered locus">SF0644</name>
    <name type="ordered locus">S0666</name>
</gene>
<sequence length="105" mass="11582">MQGKALQDFVIDKIDDLKGQDIIALDVQGKSSITDCMIICTGTSSRHVMSIADHVVQESRAAGLLPLGVEGENSADWIVVDLGDVIVHVMQEESRRLYELEKLWS</sequence>